<evidence type="ECO:0000255" key="1">
    <source>
        <dbReference type="HAMAP-Rule" id="MF_01300"/>
    </source>
</evidence>
<sequence length="430" mass="45542">MKASVFKSLYFQVLTAITLGVLLGHFYPELGAQMKPLGDGFVKLIKMIIAPVIFCTVVTGIAGMESMKAVGRTGAIALLYFEIVSTIALLIGLVIVNVVQPGAGMNIDPATLDAKAVALYAEQASQQGIIPFLLDIIPGSVVGAFASGNILQVLLFAVLFGFALHRLGEKGQLIFNVIESFSRVIFGIINMIMRLAPIGAFGAMAFTIGKYGVGSLVQLGQLIICFYITCVLFVVVVLGSIAKFNGFNIFKFIRYIKEELLIVLGTSSSESVLPRMLDKMEKAGCKKSVVGLVIPTGYSFNLDGTSIYLTMAAVFIAQATNTHMDVIHQVTLLVVLLLSSKGAAGVTGSGFIVLAATISAVGHLPLAGLALILGIDRFMSEARALTNLVGNGVATIVVAKWCNQLDNDQLQAVLSNKTLPNNEIKSSTSA</sequence>
<gene>
    <name evidence="1" type="primary">dctA</name>
    <name type="ordered locus">YE4067</name>
</gene>
<keyword id="KW-0997">Cell inner membrane</keyword>
<keyword id="KW-1003">Cell membrane</keyword>
<keyword id="KW-0472">Membrane</keyword>
<keyword id="KW-0769">Symport</keyword>
<keyword id="KW-0812">Transmembrane</keyword>
<keyword id="KW-1133">Transmembrane helix</keyword>
<keyword id="KW-0813">Transport</keyword>
<comment type="function">
    <text evidence="1">Responsible for the transport of dicarboxylates such as succinate, fumarate, and malate from the periplasm across the membrane.</text>
</comment>
<comment type="subcellular location">
    <subcellularLocation>
        <location evidence="1">Cell inner membrane</location>
        <topology evidence="1">Multi-pass membrane protein</topology>
    </subcellularLocation>
</comment>
<comment type="similarity">
    <text evidence="1">Belongs to the dicarboxylate/amino acid:cation symporter (DAACS) (TC 2.A.23) family.</text>
</comment>
<organism>
    <name type="scientific">Yersinia enterocolitica serotype O:8 / biotype 1B (strain NCTC 13174 / 8081)</name>
    <dbReference type="NCBI Taxonomy" id="393305"/>
    <lineage>
        <taxon>Bacteria</taxon>
        <taxon>Pseudomonadati</taxon>
        <taxon>Pseudomonadota</taxon>
        <taxon>Gammaproteobacteria</taxon>
        <taxon>Enterobacterales</taxon>
        <taxon>Yersiniaceae</taxon>
        <taxon>Yersinia</taxon>
    </lineage>
</organism>
<reference key="1">
    <citation type="journal article" date="2006" name="PLoS Genet.">
        <title>The complete genome sequence and comparative genome analysis of the high pathogenicity Yersinia enterocolitica strain 8081.</title>
        <authorList>
            <person name="Thomson N.R."/>
            <person name="Howard S."/>
            <person name="Wren B.W."/>
            <person name="Holden M.T.G."/>
            <person name="Crossman L."/>
            <person name="Challis G.L."/>
            <person name="Churcher C."/>
            <person name="Mungall K."/>
            <person name="Brooks K."/>
            <person name="Chillingworth T."/>
            <person name="Feltwell T."/>
            <person name="Abdellah Z."/>
            <person name="Hauser H."/>
            <person name="Jagels K."/>
            <person name="Maddison M."/>
            <person name="Moule S."/>
            <person name="Sanders M."/>
            <person name="Whitehead S."/>
            <person name="Quail M.A."/>
            <person name="Dougan G."/>
            <person name="Parkhill J."/>
            <person name="Prentice M.B."/>
        </authorList>
    </citation>
    <scope>NUCLEOTIDE SEQUENCE [LARGE SCALE GENOMIC DNA]</scope>
    <source>
        <strain>NCTC 13174 / 8081</strain>
    </source>
</reference>
<protein>
    <recommendedName>
        <fullName evidence="1">C4-dicarboxylate transport protein</fullName>
    </recommendedName>
</protein>
<accession>A1JSS6</accession>
<feature type="chain" id="PRO_1000067473" description="C4-dicarboxylate transport protein">
    <location>
        <begin position="1"/>
        <end position="430"/>
    </location>
</feature>
<feature type="transmembrane region" description="Helical" evidence="1">
    <location>
        <begin position="8"/>
        <end position="28"/>
    </location>
</feature>
<feature type="transmembrane region" description="Helical" evidence="1">
    <location>
        <begin position="44"/>
        <end position="64"/>
    </location>
</feature>
<feature type="transmembrane region" description="Helical" evidence="1">
    <location>
        <begin position="76"/>
        <end position="96"/>
    </location>
</feature>
<feature type="transmembrane region" description="Helical" evidence="1">
    <location>
        <begin position="144"/>
        <end position="164"/>
    </location>
</feature>
<feature type="transmembrane region" description="Helical" evidence="1">
    <location>
        <begin position="184"/>
        <end position="204"/>
    </location>
</feature>
<feature type="transmembrane region" description="Helical" evidence="1">
    <location>
        <begin position="222"/>
        <end position="242"/>
    </location>
</feature>
<feature type="transmembrane region" description="Helical" evidence="1">
    <location>
        <begin position="289"/>
        <end position="309"/>
    </location>
</feature>
<feature type="transmembrane region" description="Helical" evidence="1">
    <location>
        <begin position="326"/>
        <end position="346"/>
    </location>
</feature>
<feature type="transmembrane region" description="Helical" evidence="1">
    <location>
        <begin position="352"/>
        <end position="372"/>
    </location>
</feature>
<name>DCTA_YERE8</name>
<proteinExistence type="inferred from homology"/>
<dbReference type="EMBL" id="AM286415">
    <property type="protein sequence ID" value="CAL14083.1"/>
    <property type="molecule type" value="Genomic_DNA"/>
</dbReference>
<dbReference type="RefSeq" id="WP_011817389.1">
    <property type="nucleotide sequence ID" value="NC_008800.1"/>
</dbReference>
<dbReference type="RefSeq" id="YP_001008207.1">
    <property type="nucleotide sequence ID" value="NC_008800.1"/>
</dbReference>
<dbReference type="SMR" id="A1JSS6"/>
<dbReference type="KEGG" id="yen:YE4067"/>
<dbReference type="PATRIC" id="fig|393305.7.peg.4326"/>
<dbReference type="eggNOG" id="COG1301">
    <property type="taxonomic scope" value="Bacteria"/>
</dbReference>
<dbReference type="HOGENOM" id="CLU_019375_7_0_6"/>
<dbReference type="OrthoDB" id="9766690at2"/>
<dbReference type="Proteomes" id="UP000000642">
    <property type="component" value="Chromosome"/>
</dbReference>
<dbReference type="GO" id="GO:0005886">
    <property type="term" value="C:plasma membrane"/>
    <property type="evidence" value="ECO:0007669"/>
    <property type="project" value="UniProtKB-SubCell"/>
</dbReference>
<dbReference type="GO" id="GO:0015138">
    <property type="term" value="F:fumarate transmembrane transporter activity"/>
    <property type="evidence" value="ECO:0007669"/>
    <property type="project" value="TreeGrafter"/>
</dbReference>
<dbReference type="GO" id="GO:0015366">
    <property type="term" value="F:malate:proton symporter activity"/>
    <property type="evidence" value="ECO:0007669"/>
    <property type="project" value="TreeGrafter"/>
</dbReference>
<dbReference type="GO" id="GO:0015141">
    <property type="term" value="F:succinate transmembrane transporter activity"/>
    <property type="evidence" value="ECO:0007669"/>
    <property type="project" value="TreeGrafter"/>
</dbReference>
<dbReference type="GO" id="GO:0070778">
    <property type="term" value="P:L-aspartate transmembrane transport"/>
    <property type="evidence" value="ECO:0007669"/>
    <property type="project" value="TreeGrafter"/>
</dbReference>
<dbReference type="FunFam" id="1.10.3860.10:FF:000001">
    <property type="entry name" value="C4-dicarboxylate transport protein"/>
    <property type="match status" value="1"/>
</dbReference>
<dbReference type="Gene3D" id="1.10.3860.10">
    <property type="entry name" value="Sodium:dicarboxylate symporter"/>
    <property type="match status" value="1"/>
</dbReference>
<dbReference type="HAMAP" id="MF_01300">
    <property type="entry name" value="C4_dicarb_transport"/>
    <property type="match status" value="1"/>
</dbReference>
<dbReference type="InterPro" id="IPR023954">
    <property type="entry name" value="C4_dicarb_transport"/>
</dbReference>
<dbReference type="InterPro" id="IPR001991">
    <property type="entry name" value="Na-dicarboxylate_symporter"/>
</dbReference>
<dbReference type="InterPro" id="IPR018107">
    <property type="entry name" value="Na-dicarboxylate_symporter_CS"/>
</dbReference>
<dbReference type="InterPro" id="IPR036458">
    <property type="entry name" value="Na:dicarbo_symporter_sf"/>
</dbReference>
<dbReference type="NCBIfam" id="NF002461">
    <property type="entry name" value="PRK01663.1"/>
    <property type="match status" value="1"/>
</dbReference>
<dbReference type="NCBIfam" id="NF009587">
    <property type="entry name" value="PRK13027.1"/>
    <property type="match status" value="1"/>
</dbReference>
<dbReference type="PANTHER" id="PTHR42865:SF1">
    <property type="entry name" value="AEROBIC C4-DICARBOXYLATE TRANSPORT PROTEIN"/>
    <property type="match status" value="1"/>
</dbReference>
<dbReference type="PANTHER" id="PTHR42865">
    <property type="entry name" value="PROTON/GLUTAMATE-ASPARTATE SYMPORTER"/>
    <property type="match status" value="1"/>
</dbReference>
<dbReference type="Pfam" id="PF00375">
    <property type="entry name" value="SDF"/>
    <property type="match status" value="1"/>
</dbReference>
<dbReference type="PRINTS" id="PR00173">
    <property type="entry name" value="EDTRNSPORT"/>
</dbReference>
<dbReference type="SUPFAM" id="SSF118215">
    <property type="entry name" value="Proton glutamate symport protein"/>
    <property type="match status" value="1"/>
</dbReference>
<dbReference type="PROSITE" id="PS00713">
    <property type="entry name" value="NA_DICARBOXYL_SYMP_1"/>
    <property type="match status" value="1"/>
</dbReference>
<dbReference type="PROSITE" id="PS00714">
    <property type="entry name" value="NA_DICARBOXYL_SYMP_2"/>
    <property type="match status" value="1"/>
</dbReference>